<feature type="initiator methionine" description="Removed" evidence="2">
    <location>
        <position position="1"/>
    </location>
</feature>
<feature type="chain" id="PRO_0000419162" description="Histone H1.5">
    <location>
        <begin position="2"/>
        <end position="222"/>
    </location>
</feature>
<feature type="domain" description="H15" evidence="5">
    <location>
        <begin position="35"/>
        <end position="108"/>
    </location>
</feature>
<feature type="region of interest" description="Disordered" evidence="6">
    <location>
        <begin position="1"/>
        <end position="55"/>
    </location>
</feature>
<feature type="region of interest" description="Disordered" evidence="6">
    <location>
        <begin position="94"/>
        <end position="222"/>
    </location>
</feature>
<feature type="compositionally biased region" description="Low complexity" evidence="6">
    <location>
        <begin position="1"/>
        <end position="16"/>
    </location>
</feature>
<feature type="compositionally biased region" description="Basic residues" evidence="6">
    <location>
        <begin position="20"/>
        <end position="34"/>
    </location>
</feature>
<feature type="compositionally biased region" description="Basic residues" evidence="6">
    <location>
        <begin position="118"/>
        <end position="129"/>
    </location>
</feature>
<feature type="compositionally biased region" description="Basic residues" evidence="6">
    <location>
        <begin position="136"/>
        <end position="157"/>
    </location>
</feature>
<feature type="compositionally biased region" description="Basic residues" evidence="6">
    <location>
        <begin position="165"/>
        <end position="183"/>
    </location>
</feature>
<feature type="compositionally biased region" description="Basic residues" evidence="6">
    <location>
        <begin position="190"/>
        <end position="222"/>
    </location>
</feature>
<feature type="modified residue" description="N-acetylserine" evidence="2">
    <location>
        <position position="2"/>
    </location>
</feature>
<feature type="modified residue" description="Phosphoserine" evidence="7">
    <location>
        <position position="2"/>
    </location>
</feature>
<feature type="modified residue" description="N6-acetyllysine" evidence="3">
    <location>
        <position position="17"/>
    </location>
</feature>
<feature type="modified residue" description="Phosphoserine" evidence="7">
    <location>
        <position position="18"/>
    </location>
</feature>
<feature type="modified residue" description="N6-methyllysine" evidence="2">
    <location>
        <position position="26"/>
    </location>
</feature>
<feature type="modified residue" description="N6-(beta-hydroxybutyryl)lysine; alternate" evidence="4">
    <location>
        <position position="33"/>
    </location>
</feature>
<feature type="modified residue" description="N6-succinyllysine; alternate" evidence="3">
    <location>
        <position position="33"/>
    </location>
</feature>
<feature type="modified residue" description="Phosphothreonine" evidence="2">
    <location>
        <position position="35"/>
    </location>
</feature>
<feature type="modified residue" description="N6-acetyllysine" evidence="3">
    <location>
        <position position="45"/>
    </location>
</feature>
<feature type="modified residue" description="N6-(beta-hydroxybutyryl)lysine" evidence="4">
    <location>
        <position position="51"/>
    </location>
</feature>
<feature type="modified residue" description="Citrulline" evidence="3">
    <location>
        <position position="53"/>
    </location>
</feature>
<feature type="modified residue" description="N6-(beta-hydroxybutyryl)lysine" evidence="4">
    <location>
        <position position="63"/>
    </location>
</feature>
<feature type="modified residue" description="N6-acetyllysine" evidence="3">
    <location>
        <position position="74"/>
    </location>
</feature>
<feature type="modified residue" description="N6-(beta-hydroxybutyryl)lysine" evidence="4">
    <location>
        <position position="84"/>
    </location>
</feature>
<feature type="modified residue" description="N6-(beta-hydroxybutyryl)lysine" evidence="4">
    <location>
        <position position="89"/>
    </location>
</feature>
<feature type="modified residue" description="N6-(beta-hydroxybutyryl)lysine" evidence="4">
    <location>
        <position position="105"/>
    </location>
</feature>
<feature type="modified residue" description="Phosphothreonine" evidence="2">
    <location>
        <position position="134"/>
    </location>
</feature>
<feature type="modified residue" description="Phosphothreonine" evidence="2">
    <location>
        <position position="151"/>
    </location>
</feature>
<feature type="modified residue" description="N6-acetyllysine" evidence="2">
    <location>
        <position position="164"/>
    </location>
</feature>
<feature type="modified residue" description="Phosphoserine" evidence="2">
    <location>
        <position position="169"/>
    </location>
</feature>
<feature type="modified residue" description="Phosphoserine" evidence="2">
    <location>
        <position position="185"/>
    </location>
</feature>
<organism>
    <name type="scientific">Rattus norvegicus</name>
    <name type="common">Rat</name>
    <dbReference type="NCBI Taxonomy" id="10116"/>
    <lineage>
        <taxon>Eukaryota</taxon>
        <taxon>Metazoa</taxon>
        <taxon>Chordata</taxon>
        <taxon>Craniata</taxon>
        <taxon>Vertebrata</taxon>
        <taxon>Euteleostomi</taxon>
        <taxon>Mammalia</taxon>
        <taxon>Eutheria</taxon>
        <taxon>Euarchontoglires</taxon>
        <taxon>Glires</taxon>
        <taxon>Rodentia</taxon>
        <taxon>Myomorpha</taxon>
        <taxon>Muroidea</taxon>
        <taxon>Muridae</taxon>
        <taxon>Murinae</taxon>
        <taxon>Rattus</taxon>
    </lineage>
</organism>
<keyword id="KW-0007">Acetylation</keyword>
<keyword id="KW-0158">Chromosome</keyword>
<keyword id="KW-0164">Citrullination</keyword>
<keyword id="KW-0238">DNA-binding</keyword>
<keyword id="KW-0379">Hydroxylation</keyword>
<keyword id="KW-0488">Methylation</keyword>
<keyword id="KW-0539">Nucleus</keyword>
<keyword id="KW-0597">Phosphoprotein</keyword>
<keyword id="KW-1185">Reference proteome</keyword>
<evidence type="ECO:0000250" key="1"/>
<evidence type="ECO:0000250" key="2">
    <source>
        <dbReference type="UniProtKB" id="P16401"/>
    </source>
</evidence>
<evidence type="ECO:0000250" key="3">
    <source>
        <dbReference type="UniProtKB" id="P43276"/>
    </source>
</evidence>
<evidence type="ECO:0000250" key="4">
    <source>
        <dbReference type="UniProtKB" id="P43277"/>
    </source>
</evidence>
<evidence type="ECO:0000255" key="5">
    <source>
        <dbReference type="PROSITE-ProRule" id="PRU00837"/>
    </source>
</evidence>
<evidence type="ECO:0000256" key="6">
    <source>
        <dbReference type="SAM" id="MobiDB-lite"/>
    </source>
</evidence>
<evidence type="ECO:0007744" key="7">
    <source>
    </source>
</evidence>
<reference key="1">
    <citation type="journal article" date="2004" name="Nature">
        <title>Genome sequence of the Brown Norway rat yields insights into mammalian evolution.</title>
        <authorList>
            <person name="Gibbs R.A."/>
            <person name="Weinstock G.M."/>
            <person name="Metzker M.L."/>
            <person name="Muzny D.M."/>
            <person name="Sodergren E.J."/>
            <person name="Scherer S."/>
            <person name="Scott G."/>
            <person name="Steffen D."/>
            <person name="Worley K.C."/>
            <person name="Burch P.E."/>
            <person name="Okwuonu G."/>
            <person name="Hines S."/>
            <person name="Lewis L."/>
            <person name="Deramo C."/>
            <person name="Delgado O."/>
            <person name="Dugan-Rocha S."/>
            <person name="Miner G."/>
            <person name="Morgan M."/>
            <person name="Hawes A."/>
            <person name="Gill R."/>
            <person name="Holt R.A."/>
            <person name="Adams M.D."/>
            <person name="Amanatides P.G."/>
            <person name="Baden-Tillson H."/>
            <person name="Barnstead M."/>
            <person name="Chin S."/>
            <person name="Evans C.A."/>
            <person name="Ferriera S."/>
            <person name="Fosler C."/>
            <person name="Glodek A."/>
            <person name="Gu Z."/>
            <person name="Jennings D."/>
            <person name="Kraft C.L."/>
            <person name="Nguyen T."/>
            <person name="Pfannkoch C.M."/>
            <person name="Sitter C."/>
            <person name="Sutton G.G."/>
            <person name="Venter J.C."/>
            <person name="Woodage T."/>
            <person name="Smith D."/>
            <person name="Lee H.-M."/>
            <person name="Gustafson E."/>
            <person name="Cahill P."/>
            <person name="Kana A."/>
            <person name="Doucette-Stamm L."/>
            <person name="Weinstock K."/>
            <person name="Fechtel K."/>
            <person name="Weiss R.B."/>
            <person name="Dunn D.M."/>
            <person name="Green E.D."/>
            <person name="Blakesley R.W."/>
            <person name="Bouffard G.G."/>
            <person name="De Jong P.J."/>
            <person name="Osoegawa K."/>
            <person name="Zhu B."/>
            <person name="Marra M."/>
            <person name="Schein J."/>
            <person name="Bosdet I."/>
            <person name="Fjell C."/>
            <person name="Jones S."/>
            <person name="Krzywinski M."/>
            <person name="Mathewson C."/>
            <person name="Siddiqui A."/>
            <person name="Wye N."/>
            <person name="McPherson J."/>
            <person name="Zhao S."/>
            <person name="Fraser C.M."/>
            <person name="Shetty J."/>
            <person name="Shatsman S."/>
            <person name="Geer K."/>
            <person name="Chen Y."/>
            <person name="Abramzon S."/>
            <person name="Nierman W.C."/>
            <person name="Havlak P.H."/>
            <person name="Chen R."/>
            <person name="Durbin K.J."/>
            <person name="Egan A."/>
            <person name="Ren Y."/>
            <person name="Song X.-Z."/>
            <person name="Li B."/>
            <person name="Liu Y."/>
            <person name="Qin X."/>
            <person name="Cawley S."/>
            <person name="Cooney A.J."/>
            <person name="D'Souza L.M."/>
            <person name="Martin K."/>
            <person name="Wu J.Q."/>
            <person name="Gonzalez-Garay M.L."/>
            <person name="Jackson A.R."/>
            <person name="Kalafus K.J."/>
            <person name="McLeod M.P."/>
            <person name="Milosavljevic A."/>
            <person name="Virk D."/>
            <person name="Volkov A."/>
            <person name="Wheeler D.A."/>
            <person name="Zhang Z."/>
            <person name="Bailey J.A."/>
            <person name="Eichler E.E."/>
            <person name="Tuzun E."/>
            <person name="Birney E."/>
            <person name="Mongin E."/>
            <person name="Ureta-Vidal A."/>
            <person name="Woodwark C."/>
            <person name="Zdobnov E."/>
            <person name="Bork P."/>
            <person name="Suyama M."/>
            <person name="Torrents D."/>
            <person name="Alexandersson M."/>
            <person name="Trask B.J."/>
            <person name="Young J.M."/>
            <person name="Huang H."/>
            <person name="Wang H."/>
            <person name="Xing H."/>
            <person name="Daniels S."/>
            <person name="Gietzen D."/>
            <person name="Schmidt J."/>
            <person name="Stevens K."/>
            <person name="Vitt U."/>
            <person name="Wingrove J."/>
            <person name="Camara F."/>
            <person name="Mar Alba M."/>
            <person name="Abril J.F."/>
            <person name="Guigo R."/>
            <person name="Smit A."/>
            <person name="Dubchak I."/>
            <person name="Rubin E.M."/>
            <person name="Couronne O."/>
            <person name="Poliakov A."/>
            <person name="Huebner N."/>
            <person name="Ganten D."/>
            <person name="Goesele C."/>
            <person name="Hummel O."/>
            <person name="Kreitler T."/>
            <person name="Lee Y.-A."/>
            <person name="Monti J."/>
            <person name="Schulz H."/>
            <person name="Zimdahl H."/>
            <person name="Himmelbauer H."/>
            <person name="Lehrach H."/>
            <person name="Jacob H.J."/>
            <person name="Bromberg S."/>
            <person name="Gullings-Handley J."/>
            <person name="Jensen-Seaman M.I."/>
            <person name="Kwitek A.E."/>
            <person name="Lazar J."/>
            <person name="Pasko D."/>
            <person name="Tonellato P.J."/>
            <person name="Twigger S."/>
            <person name="Ponting C.P."/>
            <person name="Duarte J.M."/>
            <person name="Rice S."/>
            <person name="Goodstadt L."/>
            <person name="Beatson S.A."/>
            <person name="Emes R.D."/>
            <person name="Winter E.E."/>
            <person name="Webber C."/>
            <person name="Brandt P."/>
            <person name="Nyakatura G."/>
            <person name="Adetobi M."/>
            <person name="Chiaromonte F."/>
            <person name="Elnitski L."/>
            <person name="Eswara P."/>
            <person name="Hardison R.C."/>
            <person name="Hou M."/>
            <person name="Kolbe D."/>
            <person name="Makova K."/>
            <person name="Miller W."/>
            <person name="Nekrutenko A."/>
            <person name="Riemer C."/>
            <person name="Schwartz S."/>
            <person name="Taylor J."/>
            <person name="Yang S."/>
            <person name="Zhang Y."/>
            <person name="Lindpaintner K."/>
            <person name="Andrews T.D."/>
            <person name="Caccamo M."/>
            <person name="Clamp M."/>
            <person name="Clarke L."/>
            <person name="Curwen V."/>
            <person name="Durbin R.M."/>
            <person name="Eyras E."/>
            <person name="Searle S.M."/>
            <person name="Cooper G.M."/>
            <person name="Batzoglou S."/>
            <person name="Brudno M."/>
            <person name="Sidow A."/>
            <person name="Stone E.A."/>
            <person name="Payseur B.A."/>
            <person name="Bourque G."/>
            <person name="Lopez-Otin C."/>
            <person name="Puente X.S."/>
            <person name="Chakrabarti K."/>
            <person name="Chatterji S."/>
            <person name="Dewey C."/>
            <person name="Pachter L."/>
            <person name="Bray N."/>
            <person name="Yap V.B."/>
            <person name="Caspi A."/>
            <person name="Tesler G."/>
            <person name="Pevzner P.A."/>
            <person name="Haussler D."/>
            <person name="Roskin K.M."/>
            <person name="Baertsch R."/>
            <person name="Clawson H."/>
            <person name="Furey T.S."/>
            <person name="Hinrichs A.S."/>
            <person name="Karolchik D."/>
            <person name="Kent W.J."/>
            <person name="Rosenbloom K.R."/>
            <person name="Trumbower H."/>
            <person name="Weirauch M."/>
            <person name="Cooper D.N."/>
            <person name="Stenson P.D."/>
            <person name="Ma B."/>
            <person name="Brent M."/>
            <person name="Arumugam M."/>
            <person name="Shteynberg D."/>
            <person name="Copley R.R."/>
            <person name="Taylor M.S."/>
            <person name="Riethman H."/>
            <person name="Mudunuri U."/>
            <person name="Peterson J."/>
            <person name="Guyer M."/>
            <person name="Felsenfeld A."/>
            <person name="Old S."/>
            <person name="Mockrin S."/>
            <person name="Collins F.S."/>
        </authorList>
    </citation>
    <scope>NUCLEOTIDE SEQUENCE [LARGE SCALE GENOMIC DNA]</scope>
    <source>
        <strain>Brown Norway</strain>
    </source>
</reference>
<reference key="2">
    <citation type="submission" date="2005-07" db="EMBL/GenBank/DDBJ databases">
        <authorList>
            <person name="Mural R.J."/>
            <person name="Adams M.D."/>
            <person name="Myers E.W."/>
            <person name="Smith H.O."/>
            <person name="Venter J.C."/>
        </authorList>
    </citation>
    <scope>NUCLEOTIDE SEQUENCE [LARGE SCALE GENOMIC DNA]</scope>
    <source>
        <strain>Brown Norway</strain>
    </source>
</reference>
<reference key="3">
    <citation type="journal article" date="2012" name="Nat. Commun.">
        <title>Quantitative maps of protein phosphorylation sites across 14 different rat organs and tissues.</title>
        <authorList>
            <person name="Lundby A."/>
            <person name="Secher A."/>
            <person name="Lage K."/>
            <person name="Nordsborg N.B."/>
            <person name="Dmytriyev A."/>
            <person name="Lundby C."/>
            <person name="Olsen J.V."/>
        </authorList>
    </citation>
    <scope>PHOSPHORYLATION [LARGE SCALE ANALYSIS] AT SER-2 AND SER-18</scope>
    <scope>IDENTIFICATION BY MASS SPECTROMETRY [LARGE SCALE ANALYSIS]</scope>
</reference>
<sequence>MSETAPAETTAPAPVEKSPAKKKTKKAGAAKRKATGPPVSELITKAVSASKERGGVSLPALKKALAAGGYDVEKNNSRIKLGLKSLVSKGTLVQTKGTGASGSFKLNKKVASGEAKPKAKKTGAAKAKKPTGATPKKPKKTAGAKKTVKKTPKKAKKPAAAGVKKVTKSPKKAKAAAKPKKATKSPARPKAVKSKASKPKVTKPKAAKPKAAKVKKAVSKKK</sequence>
<accession>D3ZBN0</accession>
<dbReference type="EMBL" id="AABR06092158">
    <property type="status" value="NOT_ANNOTATED_CDS"/>
    <property type="molecule type" value="Genomic_DNA"/>
</dbReference>
<dbReference type="EMBL" id="CH474072">
    <property type="protein sequence ID" value="EDL84565.1"/>
    <property type="molecule type" value="Genomic_DNA"/>
</dbReference>
<dbReference type="RefSeq" id="NP_001102887.1">
    <property type="nucleotide sequence ID" value="NM_001109417.1"/>
</dbReference>
<dbReference type="SMR" id="D3ZBN0"/>
<dbReference type="BioGRID" id="595458">
    <property type="interactions" value="5"/>
</dbReference>
<dbReference type="FunCoup" id="D3ZBN0">
    <property type="interactions" value="242"/>
</dbReference>
<dbReference type="IntAct" id="D3ZBN0">
    <property type="interactions" value="4"/>
</dbReference>
<dbReference type="STRING" id="10116.ENSRNOP00000074300"/>
<dbReference type="iPTMnet" id="D3ZBN0"/>
<dbReference type="PhosphoSitePlus" id="D3ZBN0"/>
<dbReference type="PaxDb" id="10116-ENSRNOP00000024304"/>
<dbReference type="PeptideAtlas" id="D3ZBN0"/>
<dbReference type="Ensembl" id="ENSRNOT00000091688.2">
    <property type="protein sequence ID" value="ENSRNOP00000074300.1"/>
    <property type="gene ID" value="ENSRNOG00000060355.2"/>
</dbReference>
<dbReference type="GeneID" id="680522"/>
<dbReference type="KEGG" id="rno:680522"/>
<dbReference type="UCSC" id="RGD:1590638">
    <property type="organism name" value="rat"/>
</dbReference>
<dbReference type="AGR" id="RGD:1590638"/>
<dbReference type="CTD" id="56702"/>
<dbReference type="RGD" id="1590638">
    <property type="gene designation" value="H1f5"/>
</dbReference>
<dbReference type="eggNOG" id="KOG4012">
    <property type="taxonomic scope" value="Eukaryota"/>
</dbReference>
<dbReference type="GeneTree" id="ENSGT00940000162950"/>
<dbReference type="HOGENOM" id="CLU_052897_7_0_1"/>
<dbReference type="InParanoid" id="D3ZBN0"/>
<dbReference type="OMA" id="TARPPYF"/>
<dbReference type="OrthoDB" id="9634976at2759"/>
<dbReference type="TreeFam" id="TF313664"/>
<dbReference type="Reactome" id="R-RNO-140342">
    <property type="pathway name" value="Apoptosis induced DNA fragmentation"/>
</dbReference>
<dbReference type="PRO" id="PR:D3ZBN0"/>
<dbReference type="Proteomes" id="UP000002494">
    <property type="component" value="Chromosome 17"/>
</dbReference>
<dbReference type="Proteomes" id="UP000234681">
    <property type="component" value="Chromosome 17"/>
</dbReference>
<dbReference type="Bgee" id="ENSRNOG00000060355">
    <property type="expression patterns" value="Expressed in thymus and 12 other cell types or tissues"/>
</dbReference>
<dbReference type="GO" id="GO:0000785">
    <property type="term" value="C:chromatin"/>
    <property type="evidence" value="ECO:0000266"/>
    <property type="project" value="RGD"/>
</dbReference>
<dbReference type="GO" id="GO:0000791">
    <property type="term" value="C:euchromatin"/>
    <property type="evidence" value="ECO:0000318"/>
    <property type="project" value="GO_Central"/>
</dbReference>
<dbReference type="GO" id="GO:0000792">
    <property type="term" value="C:heterochromatin"/>
    <property type="evidence" value="ECO:0000266"/>
    <property type="project" value="RGD"/>
</dbReference>
<dbReference type="GO" id="GO:0000786">
    <property type="term" value="C:nucleosome"/>
    <property type="evidence" value="ECO:0007669"/>
    <property type="project" value="InterPro"/>
</dbReference>
<dbReference type="GO" id="GO:0005634">
    <property type="term" value="C:nucleus"/>
    <property type="evidence" value="ECO:0000266"/>
    <property type="project" value="RGD"/>
</dbReference>
<dbReference type="GO" id="GO:0031490">
    <property type="term" value="F:chromatin DNA binding"/>
    <property type="evidence" value="ECO:0000266"/>
    <property type="project" value="RGD"/>
</dbReference>
<dbReference type="GO" id="GO:0003677">
    <property type="term" value="F:DNA binding"/>
    <property type="evidence" value="ECO:0000266"/>
    <property type="project" value="RGD"/>
</dbReference>
<dbReference type="GO" id="GO:0003690">
    <property type="term" value="F:double-stranded DNA binding"/>
    <property type="evidence" value="ECO:0000318"/>
    <property type="project" value="GO_Central"/>
</dbReference>
<dbReference type="GO" id="GO:0042826">
    <property type="term" value="F:histone deacetylase binding"/>
    <property type="evidence" value="ECO:0000266"/>
    <property type="project" value="RGD"/>
</dbReference>
<dbReference type="GO" id="GO:0031492">
    <property type="term" value="F:nucleosomal DNA binding"/>
    <property type="evidence" value="ECO:0000318"/>
    <property type="project" value="GO_Central"/>
</dbReference>
<dbReference type="GO" id="GO:0030527">
    <property type="term" value="F:structural constituent of chromatin"/>
    <property type="evidence" value="ECO:0007669"/>
    <property type="project" value="InterPro"/>
</dbReference>
<dbReference type="GO" id="GO:0006325">
    <property type="term" value="P:chromatin organization"/>
    <property type="evidence" value="ECO:0000266"/>
    <property type="project" value="RGD"/>
</dbReference>
<dbReference type="GO" id="GO:0030261">
    <property type="term" value="P:chromosome condensation"/>
    <property type="evidence" value="ECO:0000318"/>
    <property type="project" value="GO_Central"/>
</dbReference>
<dbReference type="GO" id="GO:0071169">
    <property type="term" value="P:establishment of protein localization to chromatin"/>
    <property type="evidence" value="ECO:0000266"/>
    <property type="project" value="RGD"/>
</dbReference>
<dbReference type="GO" id="GO:0007517">
    <property type="term" value="P:muscle organ development"/>
    <property type="evidence" value="ECO:0000266"/>
    <property type="project" value="RGD"/>
</dbReference>
<dbReference type="GO" id="GO:0045910">
    <property type="term" value="P:negative regulation of DNA recombination"/>
    <property type="evidence" value="ECO:0000318"/>
    <property type="project" value="GO_Central"/>
</dbReference>
<dbReference type="GO" id="GO:0000122">
    <property type="term" value="P:negative regulation of transcription by RNA polymerase II"/>
    <property type="evidence" value="ECO:0000266"/>
    <property type="project" value="RGD"/>
</dbReference>
<dbReference type="GO" id="GO:0006334">
    <property type="term" value="P:nucleosome assembly"/>
    <property type="evidence" value="ECO:0007669"/>
    <property type="project" value="InterPro"/>
</dbReference>
<dbReference type="GO" id="GO:0050821">
    <property type="term" value="P:protein stabilization"/>
    <property type="evidence" value="ECO:0000266"/>
    <property type="project" value="RGD"/>
</dbReference>
<dbReference type="CDD" id="cd00073">
    <property type="entry name" value="H15"/>
    <property type="match status" value="1"/>
</dbReference>
<dbReference type="FunFam" id="1.10.10.10:FF:000075">
    <property type="entry name" value="Histone H1 like"/>
    <property type="match status" value="1"/>
</dbReference>
<dbReference type="Gene3D" id="1.10.10.10">
    <property type="entry name" value="Winged helix-like DNA-binding domain superfamily/Winged helix DNA-binding domain"/>
    <property type="match status" value="1"/>
</dbReference>
<dbReference type="InterPro" id="IPR005819">
    <property type="entry name" value="H1/H5"/>
</dbReference>
<dbReference type="InterPro" id="IPR005818">
    <property type="entry name" value="Histone_H1/H5_H15"/>
</dbReference>
<dbReference type="InterPro" id="IPR036388">
    <property type="entry name" value="WH-like_DNA-bd_sf"/>
</dbReference>
<dbReference type="InterPro" id="IPR036390">
    <property type="entry name" value="WH_DNA-bd_sf"/>
</dbReference>
<dbReference type="Pfam" id="PF00538">
    <property type="entry name" value="Linker_histone"/>
    <property type="match status" value="1"/>
</dbReference>
<dbReference type="PRINTS" id="PR00624">
    <property type="entry name" value="HISTONEH5"/>
</dbReference>
<dbReference type="SMART" id="SM00526">
    <property type="entry name" value="H15"/>
    <property type="match status" value="1"/>
</dbReference>
<dbReference type="SUPFAM" id="SSF46785">
    <property type="entry name" value="Winged helix' DNA-binding domain"/>
    <property type="match status" value="1"/>
</dbReference>
<dbReference type="PROSITE" id="PS51504">
    <property type="entry name" value="H15"/>
    <property type="match status" value="1"/>
</dbReference>
<proteinExistence type="evidence at protein level"/>
<name>H15_RAT</name>
<gene>
    <name type="primary">H1-5</name>
    <name type="synonym">H1f5</name>
    <name type="synonym">HIf5</name>
    <name type="synonym">Hist1h1b</name>
</gene>
<comment type="function">
    <text evidence="1">Histone H1 protein binds to linker DNA between nucleosomes forming the macromolecular structure known as the chromatin fiber. Histones H1 are necessary for the condensation of nucleosome chains into higher-order structured fibers. Also acts as a regulator of individual gene transcription through chromatin remodeling, nucleosome spacing and DNA methylation (By similarity).</text>
</comment>
<comment type="subunit">
    <text evidence="3">Interacts with MSX1.</text>
</comment>
<comment type="subcellular location">
    <subcellularLocation>
        <location evidence="2">Nucleus</location>
    </subcellularLocation>
    <subcellularLocation>
        <location evidence="2">Chromosome</location>
    </subcellularLocation>
    <text evidence="2">Mainly localizes with heterochromatin (By similarity). Associates with actively transcribed chromatin and not heterochromatin (By similarity).</text>
</comment>
<comment type="domain">
    <text evidence="1">The C-terminal domain is required for high-affinity binding to chromatin.</text>
</comment>
<comment type="PTM">
    <text evidence="2">H1 histones are progressively phosphorylated during the cell cycle, becoming maximally phosphorylated during late G2 phase and M phase, and being dephosphorylated sharply thereafter.</text>
</comment>
<comment type="PTM">
    <text evidence="3">Citrullination at Arg-53 (H1R54ci) by PADI4 takes place within the DNA-binding site of H1 and results in its displacement from chromatin and global chromatin decondensation, thereby promoting pluripotency and stem cell maintenance.</text>
</comment>
<comment type="similarity">
    <text evidence="5">Belongs to the histone H1/H5 family.</text>
</comment>
<protein>
    <recommendedName>
        <fullName>Histone H1.5</fullName>
    </recommendedName>
</protein>